<feature type="chain" id="PRO_0000344359" description="Small ribosomal subunit protein uS7c">
    <location>
        <begin position="1"/>
        <end position="157"/>
    </location>
</feature>
<name>RR7_PAUCH</name>
<reference key="1">
    <citation type="journal article" date="2008" name="Curr. Biol.">
        <title>Chromatophore genome sequence of Paulinella sheds light on acquisition of photosynthesis by eukaryotes.</title>
        <authorList>
            <person name="Nowack E.C.M."/>
            <person name="Melkonian M."/>
            <person name="Gloeckner G."/>
        </authorList>
    </citation>
    <scope>NUCLEOTIDE SEQUENCE [LARGE SCALE GENOMIC DNA]</scope>
</reference>
<keyword id="KW-0994">Organellar chromatophore</keyword>
<keyword id="KW-0934">Plastid</keyword>
<keyword id="KW-0687">Ribonucleoprotein</keyword>
<keyword id="KW-0689">Ribosomal protein</keyword>
<keyword id="KW-0694">RNA-binding</keyword>
<keyword id="KW-0699">rRNA-binding</keyword>
<evidence type="ECO:0000250" key="1"/>
<evidence type="ECO:0000305" key="2"/>
<geneLocation type="organellar chromatophore"/>
<gene>
    <name type="primary">rps7</name>
    <name type="ordered locus">PCC_0556</name>
</gene>
<organism>
    <name type="scientific">Paulinella chromatophora</name>
    <dbReference type="NCBI Taxonomy" id="39717"/>
    <lineage>
        <taxon>Eukaryota</taxon>
        <taxon>Sar</taxon>
        <taxon>Rhizaria</taxon>
        <taxon>Cercozoa</taxon>
        <taxon>Imbricatea</taxon>
        <taxon>Silicofilosea</taxon>
        <taxon>Euglyphida</taxon>
        <taxon>Paulinellidae</taxon>
        <taxon>Paulinella</taxon>
    </lineage>
</organism>
<proteinExistence type="inferred from homology"/>
<protein>
    <recommendedName>
        <fullName evidence="2">Small ribosomal subunit protein uS7c</fullName>
    </recommendedName>
    <alternativeName>
        <fullName>30S ribosomal protein S7, organellar chromatophore</fullName>
    </alternativeName>
</protein>
<accession>B1X4W8</accession>
<dbReference type="EMBL" id="CP000815">
    <property type="protein sequence ID" value="ACB42987.1"/>
    <property type="molecule type" value="Genomic_DNA"/>
</dbReference>
<dbReference type="RefSeq" id="YP_002049197.1">
    <property type="nucleotide sequence ID" value="NC_011087.1"/>
</dbReference>
<dbReference type="SMR" id="B1X4W8"/>
<dbReference type="GeneID" id="6481675"/>
<dbReference type="GO" id="GO:0070111">
    <property type="term" value="C:organellar chromatophore"/>
    <property type="evidence" value="ECO:0007669"/>
    <property type="project" value="UniProtKB-SubCell"/>
</dbReference>
<dbReference type="GO" id="GO:0009536">
    <property type="term" value="C:plastid"/>
    <property type="evidence" value="ECO:0007669"/>
    <property type="project" value="UniProtKB-KW"/>
</dbReference>
<dbReference type="GO" id="GO:0015935">
    <property type="term" value="C:small ribosomal subunit"/>
    <property type="evidence" value="ECO:0007669"/>
    <property type="project" value="InterPro"/>
</dbReference>
<dbReference type="GO" id="GO:0019843">
    <property type="term" value="F:rRNA binding"/>
    <property type="evidence" value="ECO:0007669"/>
    <property type="project" value="UniProtKB-KW"/>
</dbReference>
<dbReference type="GO" id="GO:0003735">
    <property type="term" value="F:structural constituent of ribosome"/>
    <property type="evidence" value="ECO:0007669"/>
    <property type="project" value="InterPro"/>
</dbReference>
<dbReference type="GO" id="GO:0006412">
    <property type="term" value="P:translation"/>
    <property type="evidence" value="ECO:0007669"/>
    <property type="project" value="InterPro"/>
</dbReference>
<dbReference type="CDD" id="cd14871">
    <property type="entry name" value="uS7_Chloroplast"/>
    <property type="match status" value="1"/>
</dbReference>
<dbReference type="FunFam" id="1.10.455.10:FF:000001">
    <property type="entry name" value="30S ribosomal protein S7"/>
    <property type="match status" value="1"/>
</dbReference>
<dbReference type="Gene3D" id="1.10.455.10">
    <property type="entry name" value="Ribosomal protein S7 domain"/>
    <property type="match status" value="1"/>
</dbReference>
<dbReference type="HAMAP" id="MF_00480_B">
    <property type="entry name" value="Ribosomal_uS7_B"/>
    <property type="match status" value="1"/>
</dbReference>
<dbReference type="InterPro" id="IPR000235">
    <property type="entry name" value="Ribosomal_uS7"/>
</dbReference>
<dbReference type="InterPro" id="IPR005717">
    <property type="entry name" value="Ribosomal_uS7_bac/org-type"/>
</dbReference>
<dbReference type="InterPro" id="IPR020606">
    <property type="entry name" value="Ribosomal_uS7_CS"/>
</dbReference>
<dbReference type="InterPro" id="IPR023798">
    <property type="entry name" value="Ribosomal_uS7_dom"/>
</dbReference>
<dbReference type="InterPro" id="IPR036823">
    <property type="entry name" value="Ribosomal_uS7_dom_sf"/>
</dbReference>
<dbReference type="NCBIfam" id="TIGR01029">
    <property type="entry name" value="rpsG_bact"/>
    <property type="match status" value="1"/>
</dbReference>
<dbReference type="PANTHER" id="PTHR11205">
    <property type="entry name" value="RIBOSOMAL PROTEIN S7"/>
    <property type="match status" value="1"/>
</dbReference>
<dbReference type="Pfam" id="PF00177">
    <property type="entry name" value="Ribosomal_S7"/>
    <property type="match status" value="1"/>
</dbReference>
<dbReference type="PIRSF" id="PIRSF002122">
    <property type="entry name" value="RPS7p_RPS7a_RPS5e_RPS7o"/>
    <property type="match status" value="1"/>
</dbReference>
<dbReference type="SUPFAM" id="SSF47973">
    <property type="entry name" value="Ribosomal protein S7"/>
    <property type="match status" value="1"/>
</dbReference>
<dbReference type="PROSITE" id="PS00052">
    <property type="entry name" value="RIBOSOMAL_S7"/>
    <property type="match status" value="1"/>
</dbReference>
<sequence>MSRRNAAEKRPVLPDPQFNSRLATMIVARLMKHGKKSTAQRILSDAFQLISQRSNGADPLEVFETAVRNATPLVEVRARRVGGATYQVPMEVRQERGTAMALRWLVNFSRTRNGRSMAQKLAGELIDAANEAGNTVRKREETHKMAEANKAFAHYRY</sequence>
<comment type="function">
    <text evidence="1">One of the primary rRNA binding proteins, it binds directly to 16S rRNA where it nucleates assembly of the head domain of the 30S subunit.</text>
</comment>
<comment type="subunit">
    <text evidence="1">Part of the 30S ribosomal subunit.</text>
</comment>
<comment type="subcellular location">
    <subcellularLocation>
        <location>Plastid</location>
        <location>Organellar chromatophore</location>
    </subcellularLocation>
</comment>
<comment type="similarity">
    <text evidence="2">Belongs to the universal ribosomal protein uS7 family.</text>
</comment>